<accession>B7VJG2</accession>
<proteinExistence type="inferred from homology"/>
<gene>
    <name evidence="1" type="primary">prfC</name>
    <name type="ordered locus">VS_2467</name>
</gene>
<keyword id="KW-0963">Cytoplasm</keyword>
<keyword id="KW-0342">GTP-binding</keyword>
<keyword id="KW-0547">Nucleotide-binding</keyword>
<keyword id="KW-0648">Protein biosynthesis</keyword>
<protein>
    <recommendedName>
        <fullName evidence="1">Peptide chain release factor 3</fullName>
        <shortName evidence="1">RF-3</shortName>
    </recommendedName>
</protein>
<sequence>MSFQQEVSKRRTFAIISHPDAGKTTITEKVLLFGNAIQKAGTVKGRGSNQHAKSDWMEMEKERGISVTTSVMQFPYNDCLVNLLDTPGHEDFSEDTYRTLTAVDSCLMVIDAAKGVEDRTRKLMEVTRLRDTPIVTFMNKLDRDVRDPMEVLDEVESELGMACAPISWPIGCGKEFKGVYHIHRDETILYESGHGHEIQEVRIIKGLDNPELDEAVGEDLASSVREELELVIGACPEFDHELFLAGELTPVYFGTALGNFGVDHMLDGLTRWAPAPQTRQANERDVEATEEKFSGFVFKIQANMDPKHRDRIAFMRIVSGTYDQGMKMNHVRTGKNVSISDAVTFMAGDRARAEKAYAGDIIGLHNHGTIQIGDTFTQGESLKFAGIPNFAPELFRRIRLRDPLKQKQLLKGLVQLSEEGAVQVFRPLQNNDLIVGAVGVLQFDVVVARLKAEYNVEAIYEGVNVATARWVECDDAKKLEEFKRKSQANLALDGGDNLSYIAPTMVNLNLASERFPEVQFRATREH</sequence>
<organism>
    <name type="scientific">Vibrio atlanticus (strain LGP32)</name>
    <name type="common">Vibrio splendidus (strain Mel32)</name>
    <dbReference type="NCBI Taxonomy" id="575788"/>
    <lineage>
        <taxon>Bacteria</taxon>
        <taxon>Pseudomonadati</taxon>
        <taxon>Pseudomonadota</taxon>
        <taxon>Gammaproteobacteria</taxon>
        <taxon>Vibrionales</taxon>
        <taxon>Vibrionaceae</taxon>
        <taxon>Vibrio</taxon>
    </lineage>
</organism>
<dbReference type="EMBL" id="FM954972">
    <property type="protein sequence ID" value="CAV19626.1"/>
    <property type="molecule type" value="Genomic_DNA"/>
</dbReference>
<dbReference type="SMR" id="B7VJG2"/>
<dbReference type="STRING" id="575788.VS_2467"/>
<dbReference type="KEGG" id="vsp:VS_2467"/>
<dbReference type="eggNOG" id="COG4108">
    <property type="taxonomic scope" value="Bacteria"/>
</dbReference>
<dbReference type="HOGENOM" id="CLU_002794_2_1_6"/>
<dbReference type="Proteomes" id="UP000009100">
    <property type="component" value="Chromosome 1"/>
</dbReference>
<dbReference type="GO" id="GO:0005829">
    <property type="term" value="C:cytosol"/>
    <property type="evidence" value="ECO:0007669"/>
    <property type="project" value="TreeGrafter"/>
</dbReference>
<dbReference type="GO" id="GO:0005525">
    <property type="term" value="F:GTP binding"/>
    <property type="evidence" value="ECO:0007669"/>
    <property type="project" value="UniProtKB-UniRule"/>
</dbReference>
<dbReference type="GO" id="GO:0003924">
    <property type="term" value="F:GTPase activity"/>
    <property type="evidence" value="ECO:0007669"/>
    <property type="project" value="InterPro"/>
</dbReference>
<dbReference type="GO" id="GO:0097216">
    <property type="term" value="F:guanosine tetraphosphate binding"/>
    <property type="evidence" value="ECO:0007669"/>
    <property type="project" value="UniProtKB-ARBA"/>
</dbReference>
<dbReference type="GO" id="GO:0016150">
    <property type="term" value="F:translation release factor activity, codon nonspecific"/>
    <property type="evidence" value="ECO:0007669"/>
    <property type="project" value="TreeGrafter"/>
</dbReference>
<dbReference type="GO" id="GO:0016149">
    <property type="term" value="F:translation release factor activity, codon specific"/>
    <property type="evidence" value="ECO:0007669"/>
    <property type="project" value="UniProtKB-UniRule"/>
</dbReference>
<dbReference type="GO" id="GO:0006449">
    <property type="term" value="P:regulation of translational termination"/>
    <property type="evidence" value="ECO:0007669"/>
    <property type="project" value="UniProtKB-UniRule"/>
</dbReference>
<dbReference type="CDD" id="cd04169">
    <property type="entry name" value="RF3"/>
    <property type="match status" value="1"/>
</dbReference>
<dbReference type="CDD" id="cd03689">
    <property type="entry name" value="RF3_II"/>
    <property type="match status" value="1"/>
</dbReference>
<dbReference type="CDD" id="cd16259">
    <property type="entry name" value="RF3_III"/>
    <property type="match status" value="1"/>
</dbReference>
<dbReference type="FunFam" id="2.40.30.10:FF:000040">
    <property type="entry name" value="Peptide chain release factor 3"/>
    <property type="match status" value="1"/>
</dbReference>
<dbReference type="FunFam" id="3.30.70.3280:FF:000001">
    <property type="entry name" value="Peptide chain release factor 3"/>
    <property type="match status" value="1"/>
</dbReference>
<dbReference type="FunFam" id="3.40.50.300:FF:000542">
    <property type="entry name" value="Peptide chain release factor 3"/>
    <property type="match status" value="1"/>
</dbReference>
<dbReference type="Gene3D" id="3.40.50.300">
    <property type="entry name" value="P-loop containing nucleotide triphosphate hydrolases"/>
    <property type="match status" value="2"/>
</dbReference>
<dbReference type="Gene3D" id="3.30.70.3280">
    <property type="entry name" value="Peptide chain release factor 3, domain III"/>
    <property type="match status" value="1"/>
</dbReference>
<dbReference type="HAMAP" id="MF_00072">
    <property type="entry name" value="Rel_fac_3"/>
    <property type="match status" value="1"/>
</dbReference>
<dbReference type="InterPro" id="IPR053905">
    <property type="entry name" value="EF-G-like_DII"/>
</dbReference>
<dbReference type="InterPro" id="IPR035647">
    <property type="entry name" value="EFG_III/V"/>
</dbReference>
<dbReference type="InterPro" id="IPR031157">
    <property type="entry name" value="G_TR_CS"/>
</dbReference>
<dbReference type="InterPro" id="IPR027417">
    <property type="entry name" value="P-loop_NTPase"/>
</dbReference>
<dbReference type="InterPro" id="IPR004548">
    <property type="entry name" value="PrfC"/>
</dbReference>
<dbReference type="InterPro" id="IPR032090">
    <property type="entry name" value="RF3_C"/>
</dbReference>
<dbReference type="InterPro" id="IPR038467">
    <property type="entry name" value="RF3_dom_3_sf"/>
</dbReference>
<dbReference type="InterPro" id="IPR041732">
    <property type="entry name" value="RF3_GTP-bd"/>
</dbReference>
<dbReference type="InterPro" id="IPR005225">
    <property type="entry name" value="Small_GTP-bd"/>
</dbReference>
<dbReference type="InterPro" id="IPR000795">
    <property type="entry name" value="T_Tr_GTP-bd_dom"/>
</dbReference>
<dbReference type="InterPro" id="IPR009000">
    <property type="entry name" value="Transl_B-barrel_sf"/>
</dbReference>
<dbReference type="NCBIfam" id="TIGR00503">
    <property type="entry name" value="prfC"/>
    <property type="match status" value="1"/>
</dbReference>
<dbReference type="NCBIfam" id="NF001964">
    <property type="entry name" value="PRK00741.1"/>
    <property type="match status" value="1"/>
</dbReference>
<dbReference type="NCBIfam" id="TIGR00231">
    <property type="entry name" value="small_GTP"/>
    <property type="match status" value="1"/>
</dbReference>
<dbReference type="PANTHER" id="PTHR43556">
    <property type="entry name" value="PEPTIDE CHAIN RELEASE FACTOR RF3"/>
    <property type="match status" value="1"/>
</dbReference>
<dbReference type="PANTHER" id="PTHR43556:SF2">
    <property type="entry name" value="PEPTIDE CHAIN RELEASE FACTOR RF3"/>
    <property type="match status" value="1"/>
</dbReference>
<dbReference type="Pfam" id="PF22042">
    <property type="entry name" value="EF-G_D2"/>
    <property type="match status" value="1"/>
</dbReference>
<dbReference type="Pfam" id="PF00009">
    <property type="entry name" value="GTP_EFTU"/>
    <property type="match status" value="1"/>
</dbReference>
<dbReference type="Pfam" id="PF16658">
    <property type="entry name" value="RF3_C"/>
    <property type="match status" value="1"/>
</dbReference>
<dbReference type="PRINTS" id="PR00315">
    <property type="entry name" value="ELONGATNFCT"/>
</dbReference>
<dbReference type="SUPFAM" id="SSF54980">
    <property type="entry name" value="EF-G C-terminal domain-like"/>
    <property type="match status" value="1"/>
</dbReference>
<dbReference type="SUPFAM" id="SSF52540">
    <property type="entry name" value="P-loop containing nucleoside triphosphate hydrolases"/>
    <property type="match status" value="1"/>
</dbReference>
<dbReference type="SUPFAM" id="SSF50447">
    <property type="entry name" value="Translation proteins"/>
    <property type="match status" value="1"/>
</dbReference>
<dbReference type="PROSITE" id="PS00301">
    <property type="entry name" value="G_TR_1"/>
    <property type="match status" value="1"/>
</dbReference>
<dbReference type="PROSITE" id="PS51722">
    <property type="entry name" value="G_TR_2"/>
    <property type="match status" value="1"/>
</dbReference>
<reference key="1">
    <citation type="submission" date="2009-02" db="EMBL/GenBank/DDBJ databases">
        <title>Vibrio splendidus str. LGP32 complete genome.</title>
        <authorList>
            <person name="Mazel D."/>
            <person name="Le Roux F."/>
        </authorList>
    </citation>
    <scope>NUCLEOTIDE SEQUENCE [LARGE SCALE GENOMIC DNA]</scope>
    <source>
        <strain>LGP32</strain>
    </source>
</reference>
<comment type="function">
    <text evidence="1">Increases the formation of ribosomal termination complexes and stimulates activities of RF-1 and RF-2. It binds guanine nucleotides and has strong preference for UGA stop codons. It may interact directly with the ribosome. The stimulation of RF-1 and RF-2 is significantly reduced by GTP and GDP, but not by GMP.</text>
</comment>
<comment type="subcellular location">
    <subcellularLocation>
        <location evidence="1">Cytoplasm</location>
    </subcellularLocation>
</comment>
<comment type="similarity">
    <text evidence="1">Belongs to the TRAFAC class translation factor GTPase superfamily. Classic translation factor GTPase family. PrfC subfamily.</text>
</comment>
<feature type="chain" id="PRO_1000118103" description="Peptide chain release factor 3">
    <location>
        <begin position="1"/>
        <end position="526"/>
    </location>
</feature>
<feature type="domain" description="tr-type G">
    <location>
        <begin position="8"/>
        <end position="277"/>
    </location>
</feature>
<feature type="binding site" evidence="1">
    <location>
        <begin position="17"/>
        <end position="24"/>
    </location>
    <ligand>
        <name>GTP</name>
        <dbReference type="ChEBI" id="CHEBI:37565"/>
    </ligand>
</feature>
<feature type="binding site" evidence="1">
    <location>
        <begin position="85"/>
        <end position="89"/>
    </location>
    <ligand>
        <name>GTP</name>
        <dbReference type="ChEBI" id="CHEBI:37565"/>
    </ligand>
</feature>
<feature type="binding site" evidence="1">
    <location>
        <begin position="139"/>
        <end position="142"/>
    </location>
    <ligand>
        <name>GTP</name>
        <dbReference type="ChEBI" id="CHEBI:37565"/>
    </ligand>
</feature>
<evidence type="ECO:0000255" key="1">
    <source>
        <dbReference type="HAMAP-Rule" id="MF_00072"/>
    </source>
</evidence>
<name>RF3_VIBA3</name>